<reference key="1">
    <citation type="journal article" date="2002" name="J. Bacteriol.">
        <title>Whole-genome comparison of Mycobacterium tuberculosis clinical and laboratory strains.</title>
        <authorList>
            <person name="Fleischmann R.D."/>
            <person name="Alland D."/>
            <person name="Eisen J.A."/>
            <person name="Carpenter L."/>
            <person name="White O."/>
            <person name="Peterson J.D."/>
            <person name="DeBoy R.T."/>
            <person name="Dodson R.J."/>
            <person name="Gwinn M.L."/>
            <person name="Haft D.H."/>
            <person name="Hickey E.K."/>
            <person name="Kolonay J.F."/>
            <person name="Nelson W.C."/>
            <person name="Umayam L.A."/>
            <person name="Ermolaeva M.D."/>
            <person name="Salzberg S.L."/>
            <person name="Delcher A."/>
            <person name="Utterback T.R."/>
            <person name="Weidman J.F."/>
            <person name="Khouri H.M."/>
            <person name="Gill J."/>
            <person name="Mikula A."/>
            <person name="Bishai W."/>
            <person name="Jacobs W.R. Jr."/>
            <person name="Venter J.C."/>
            <person name="Fraser C.M."/>
        </authorList>
    </citation>
    <scope>NUCLEOTIDE SEQUENCE [LARGE SCALE GENOMIC DNA]</scope>
    <source>
        <strain>CDC 1551 / Oshkosh</strain>
    </source>
</reference>
<dbReference type="EC" id="2.5.1.7" evidence="1"/>
<dbReference type="EMBL" id="AE000516">
    <property type="protein sequence ID" value="AAK45617.1"/>
    <property type="molecule type" value="Genomic_DNA"/>
</dbReference>
<dbReference type="PIR" id="G70775">
    <property type="entry name" value="G70775"/>
</dbReference>
<dbReference type="RefSeq" id="WP_003406845.1">
    <property type="nucleotide sequence ID" value="NZ_KK341227.1"/>
</dbReference>
<dbReference type="SMR" id="P9WJM0"/>
<dbReference type="GeneID" id="45425288"/>
<dbReference type="KEGG" id="mtc:MT1355"/>
<dbReference type="PATRIC" id="fig|83331.31.peg.1461"/>
<dbReference type="HOGENOM" id="CLU_027387_0_0_11"/>
<dbReference type="UniPathway" id="UPA00219"/>
<dbReference type="Proteomes" id="UP000001020">
    <property type="component" value="Chromosome"/>
</dbReference>
<dbReference type="GO" id="GO:0005737">
    <property type="term" value="C:cytoplasm"/>
    <property type="evidence" value="ECO:0007669"/>
    <property type="project" value="UniProtKB-SubCell"/>
</dbReference>
<dbReference type="GO" id="GO:0008760">
    <property type="term" value="F:UDP-N-acetylglucosamine 1-carboxyvinyltransferase activity"/>
    <property type="evidence" value="ECO:0007669"/>
    <property type="project" value="UniProtKB-UniRule"/>
</dbReference>
<dbReference type="GO" id="GO:0051301">
    <property type="term" value="P:cell division"/>
    <property type="evidence" value="ECO:0007669"/>
    <property type="project" value="UniProtKB-KW"/>
</dbReference>
<dbReference type="GO" id="GO:0071555">
    <property type="term" value="P:cell wall organization"/>
    <property type="evidence" value="ECO:0007669"/>
    <property type="project" value="UniProtKB-KW"/>
</dbReference>
<dbReference type="GO" id="GO:0009252">
    <property type="term" value="P:peptidoglycan biosynthetic process"/>
    <property type="evidence" value="ECO:0007669"/>
    <property type="project" value="UniProtKB-UniRule"/>
</dbReference>
<dbReference type="GO" id="GO:0008360">
    <property type="term" value="P:regulation of cell shape"/>
    <property type="evidence" value="ECO:0007669"/>
    <property type="project" value="UniProtKB-KW"/>
</dbReference>
<dbReference type="GO" id="GO:0019277">
    <property type="term" value="P:UDP-N-acetylgalactosamine biosynthetic process"/>
    <property type="evidence" value="ECO:0007669"/>
    <property type="project" value="InterPro"/>
</dbReference>
<dbReference type="CDD" id="cd01555">
    <property type="entry name" value="UdpNAET"/>
    <property type="match status" value="1"/>
</dbReference>
<dbReference type="Gene3D" id="3.65.10.10">
    <property type="entry name" value="Enolpyruvate transferase domain"/>
    <property type="match status" value="2"/>
</dbReference>
<dbReference type="HAMAP" id="MF_00111">
    <property type="entry name" value="MurA"/>
    <property type="match status" value="1"/>
</dbReference>
<dbReference type="InterPro" id="IPR001986">
    <property type="entry name" value="Enolpyruvate_Tfrase_dom"/>
</dbReference>
<dbReference type="InterPro" id="IPR036968">
    <property type="entry name" value="Enolpyruvate_Tfrase_sf"/>
</dbReference>
<dbReference type="InterPro" id="IPR050068">
    <property type="entry name" value="MurA_subfamily"/>
</dbReference>
<dbReference type="InterPro" id="IPR013792">
    <property type="entry name" value="RNA3'P_cycl/enolpyr_Trfase_a/b"/>
</dbReference>
<dbReference type="InterPro" id="IPR005750">
    <property type="entry name" value="UDP_GlcNAc_COvinyl_MurA"/>
</dbReference>
<dbReference type="NCBIfam" id="TIGR01072">
    <property type="entry name" value="murA"/>
    <property type="match status" value="1"/>
</dbReference>
<dbReference type="NCBIfam" id="NF006873">
    <property type="entry name" value="PRK09369.1"/>
    <property type="match status" value="1"/>
</dbReference>
<dbReference type="PANTHER" id="PTHR43783">
    <property type="entry name" value="UDP-N-ACETYLGLUCOSAMINE 1-CARBOXYVINYLTRANSFERASE"/>
    <property type="match status" value="1"/>
</dbReference>
<dbReference type="PANTHER" id="PTHR43783:SF1">
    <property type="entry name" value="UDP-N-ACETYLGLUCOSAMINE 1-CARBOXYVINYLTRANSFERASE"/>
    <property type="match status" value="1"/>
</dbReference>
<dbReference type="Pfam" id="PF00275">
    <property type="entry name" value="EPSP_synthase"/>
    <property type="match status" value="1"/>
</dbReference>
<dbReference type="SUPFAM" id="SSF55205">
    <property type="entry name" value="EPT/RTPC-like"/>
    <property type="match status" value="1"/>
</dbReference>
<accession>P9WJM0</accession>
<accession>L0T6H7</accession>
<accession>P0A5L2</accession>
<accession>Q10604</accession>
<gene>
    <name evidence="1" type="primary">murA</name>
    <name type="synonym">murZ</name>
    <name type="ordered locus">MT1355</name>
</gene>
<organism>
    <name type="scientific">Mycobacterium tuberculosis (strain CDC 1551 / Oshkosh)</name>
    <dbReference type="NCBI Taxonomy" id="83331"/>
    <lineage>
        <taxon>Bacteria</taxon>
        <taxon>Bacillati</taxon>
        <taxon>Actinomycetota</taxon>
        <taxon>Actinomycetes</taxon>
        <taxon>Mycobacteriales</taxon>
        <taxon>Mycobacteriaceae</taxon>
        <taxon>Mycobacterium</taxon>
        <taxon>Mycobacterium tuberculosis complex</taxon>
    </lineage>
</organism>
<sequence length="418" mass="44064">MAERFVVTGGNRLSGEVAVGGAKNSVLKLMAATLLAEGTSTITNCPDILDVPLMAEVLRGLGATVELDGDVARITAPDEPKYDADFAAVRQFRASVCVLGPLVGRCKRARVALPGGDAIGSRPLDMHQAGLRQLGAHCNIEHGCVVARAETLRGAEIQLEFPSVGATENILMAAVVAEGVTTIHNAAREPDVVDLCTMLNQMGAQVEGAGSPTMTITGVPRLHPTEHRVIGDRIVAATWGIAAAMTRGDISVAGVDPAHLQLVLHKLHDAGATVTQTDASFRVTQYERPKAVNVATLPFPGFPTDLQPMAIALASIADGTSMITENVFEARFRFVEEMIRLGADARTDGHHAVVRGLPQLSSAPVWCSDIRAGAGLVLAGLVADGDTEVHDVFHIDRGYPLFVENLVSLGAEIERVCC</sequence>
<evidence type="ECO:0000255" key="1">
    <source>
        <dbReference type="HAMAP-Rule" id="MF_00111"/>
    </source>
</evidence>
<protein>
    <recommendedName>
        <fullName evidence="1">UDP-N-acetylglucosamine 1-carboxyvinyltransferase</fullName>
        <ecNumber evidence="1">2.5.1.7</ecNumber>
    </recommendedName>
    <alternativeName>
        <fullName evidence="1">Enoylpyruvate transferase</fullName>
    </alternativeName>
    <alternativeName>
        <fullName evidence="1">UDP-N-acetylglucosamine enolpyruvyl transferase</fullName>
        <shortName evidence="1">EPT</shortName>
    </alternativeName>
</protein>
<proteinExistence type="inferred from homology"/>
<feature type="chain" id="PRO_0000427806" description="UDP-N-acetylglucosamine 1-carboxyvinyltransferase">
    <location>
        <begin position="1"/>
        <end position="418"/>
    </location>
</feature>
<feature type="active site" description="Proton donor" evidence="1">
    <location>
        <position position="117"/>
    </location>
</feature>
<feature type="binding site" evidence="1">
    <location>
        <begin position="23"/>
        <end position="24"/>
    </location>
    <ligand>
        <name>phosphoenolpyruvate</name>
        <dbReference type="ChEBI" id="CHEBI:58702"/>
    </ligand>
</feature>
<feature type="binding site" evidence="1">
    <location>
        <position position="93"/>
    </location>
    <ligand>
        <name>UDP-N-acetyl-alpha-D-glucosamine</name>
        <dbReference type="ChEBI" id="CHEBI:57705"/>
    </ligand>
</feature>
<feature type="binding site" evidence="1">
    <location>
        <position position="305"/>
    </location>
    <ligand>
        <name>UDP-N-acetyl-alpha-D-glucosamine</name>
        <dbReference type="ChEBI" id="CHEBI:57705"/>
    </ligand>
</feature>
<feature type="binding site" evidence="1">
    <location>
        <position position="327"/>
    </location>
    <ligand>
        <name>UDP-N-acetyl-alpha-D-glucosamine</name>
        <dbReference type="ChEBI" id="CHEBI:57705"/>
    </ligand>
</feature>
<keyword id="KW-0131">Cell cycle</keyword>
<keyword id="KW-0132">Cell division</keyword>
<keyword id="KW-0133">Cell shape</keyword>
<keyword id="KW-0961">Cell wall biogenesis/degradation</keyword>
<keyword id="KW-0963">Cytoplasm</keyword>
<keyword id="KW-0573">Peptidoglycan synthesis</keyword>
<keyword id="KW-1185">Reference proteome</keyword>
<keyword id="KW-0808">Transferase</keyword>
<name>MURA_MYCTO</name>
<comment type="function">
    <text evidence="1">Cell wall formation. Adds enolpyruvyl to UDP-N-acetylglucosamine.</text>
</comment>
<comment type="catalytic activity">
    <reaction evidence="1">
        <text>phosphoenolpyruvate + UDP-N-acetyl-alpha-D-glucosamine = UDP-N-acetyl-3-O-(1-carboxyvinyl)-alpha-D-glucosamine + phosphate</text>
        <dbReference type="Rhea" id="RHEA:18681"/>
        <dbReference type="ChEBI" id="CHEBI:43474"/>
        <dbReference type="ChEBI" id="CHEBI:57705"/>
        <dbReference type="ChEBI" id="CHEBI:58702"/>
        <dbReference type="ChEBI" id="CHEBI:68483"/>
        <dbReference type="EC" id="2.5.1.7"/>
    </reaction>
</comment>
<comment type="pathway">
    <text evidence="1">Cell wall biogenesis; peptidoglycan biosynthesis.</text>
</comment>
<comment type="subcellular location">
    <subcellularLocation>
        <location evidence="1">Cytoplasm</location>
    </subcellularLocation>
</comment>
<comment type="similarity">
    <text evidence="1">Belongs to the EPSP synthase family. MurA subfamily.</text>
</comment>